<proteinExistence type="inferred from homology"/>
<feature type="chain" id="PRO_1000087700" description="Ribosomal RNA large subunit methyltransferase E">
    <location>
        <begin position="1"/>
        <end position="207"/>
    </location>
</feature>
<feature type="active site" description="Proton acceptor" evidence="1">
    <location>
        <position position="161"/>
    </location>
</feature>
<feature type="binding site" evidence="1">
    <location>
        <position position="60"/>
    </location>
    <ligand>
        <name>S-adenosyl-L-methionine</name>
        <dbReference type="ChEBI" id="CHEBI:59789"/>
    </ligand>
</feature>
<feature type="binding site" evidence="1">
    <location>
        <position position="62"/>
    </location>
    <ligand>
        <name>S-adenosyl-L-methionine</name>
        <dbReference type="ChEBI" id="CHEBI:59789"/>
    </ligand>
</feature>
<feature type="binding site" evidence="1">
    <location>
        <position position="80"/>
    </location>
    <ligand>
        <name>S-adenosyl-L-methionine</name>
        <dbReference type="ChEBI" id="CHEBI:59789"/>
    </ligand>
</feature>
<feature type="binding site" evidence="1">
    <location>
        <position position="96"/>
    </location>
    <ligand>
        <name>S-adenosyl-L-methionine</name>
        <dbReference type="ChEBI" id="CHEBI:59789"/>
    </ligand>
</feature>
<feature type="binding site" evidence="1">
    <location>
        <position position="121"/>
    </location>
    <ligand>
        <name>S-adenosyl-L-methionine</name>
        <dbReference type="ChEBI" id="CHEBI:59789"/>
    </ligand>
</feature>
<protein>
    <recommendedName>
        <fullName evidence="1">Ribosomal RNA large subunit methyltransferase E</fullName>
        <ecNumber evidence="1">2.1.1.166</ecNumber>
    </recommendedName>
    <alternativeName>
        <fullName evidence="1">23S rRNA Um2552 methyltransferase</fullName>
    </alternativeName>
    <alternativeName>
        <fullName evidence="1">rRNA (uridine-2'-O-)-methyltransferase</fullName>
    </alternativeName>
</protein>
<comment type="function">
    <text evidence="1">Specifically methylates the uridine in position 2552 of 23S rRNA at the 2'-O position of the ribose in the fully assembled 50S ribosomal subunit.</text>
</comment>
<comment type="catalytic activity">
    <reaction evidence="1">
        <text>uridine(2552) in 23S rRNA + S-adenosyl-L-methionine = 2'-O-methyluridine(2552) in 23S rRNA + S-adenosyl-L-homocysteine + H(+)</text>
        <dbReference type="Rhea" id="RHEA:42720"/>
        <dbReference type="Rhea" id="RHEA-COMP:10202"/>
        <dbReference type="Rhea" id="RHEA-COMP:10203"/>
        <dbReference type="ChEBI" id="CHEBI:15378"/>
        <dbReference type="ChEBI" id="CHEBI:57856"/>
        <dbReference type="ChEBI" id="CHEBI:59789"/>
        <dbReference type="ChEBI" id="CHEBI:65315"/>
        <dbReference type="ChEBI" id="CHEBI:74478"/>
        <dbReference type="EC" id="2.1.1.166"/>
    </reaction>
</comment>
<comment type="subcellular location">
    <subcellularLocation>
        <location evidence="1">Cytoplasm</location>
    </subcellularLocation>
</comment>
<comment type="similarity">
    <text evidence="1">Belongs to the class I-like SAM-binding methyltransferase superfamily. RNA methyltransferase RlmE family.</text>
</comment>
<accession>A4XYE8</accession>
<keyword id="KW-0963">Cytoplasm</keyword>
<keyword id="KW-0489">Methyltransferase</keyword>
<keyword id="KW-0698">rRNA processing</keyword>
<keyword id="KW-0949">S-adenosyl-L-methionine</keyword>
<keyword id="KW-0808">Transferase</keyword>
<reference key="1">
    <citation type="submission" date="2007-04" db="EMBL/GenBank/DDBJ databases">
        <title>Complete sequence of Pseudomonas mendocina ymp.</title>
        <authorList>
            <consortium name="US DOE Joint Genome Institute"/>
            <person name="Copeland A."/>
            <person name="Lucas S."/>
            <person name="Lapidus A."/>
            <person name="Barry K."/>
            <person name="Glavina del Rio T."/>
            <person name="Dalin E."/>
            <person name="Tice H."/>
            <person name="Pitluck S."/>
            <person name="Kiss H."/>
            <person name="Brettin T."/>
            <person name="Detter J.C."/>
            <person name="Bruce D."/>
            <person name="Han C."/>
            <person name="Schmutz J."/>
            <person name="Larimer F."/>
            <person name="Land M."/>
            <person name="Hauser L."/>
            <person name="Kyrpides N."/>
            <person name="Mikhailova N."/>
            <person name="Hersman L."/>
            <person name="Dubois J."/>
            <person name="Maurice P."/>
            <person name="Richardson P."/>
        </authorList>
    </citation>
    <scope>NUCLEOTIDE SEQUENCE [LARGE SCALE GENOMIC DNA]</scope>
    <source>
        <strain>ymp</strain>
    </source>
</reference>
<name>RLME_ECTM1</name>
<sequence>MARSKTSQRWLKEHFDDPYVKMAQKDGYRSRASYKLLEIQEKDRILRPGMTVVDLGAAPGGWSQVTSRVIGDKGRLIASDILEMDSIPDVTFIQGDFTDDAVFARILEAIGENPVDLVISDMAPNMSGVRAADQPRAMYLCELALDLAGRVLRPGGDFLIKIFQGEGFDTYHRQVRDSFDKVQMRKPLSSRDRSREQYLLARGFRGV</sequence>
<gene>
    <name evidence="1" type="primary">rlmE</name>
    <name evidence="1" type="synonym">ftsJ</name>
    <name evidence="1" type="synonym">rrmJ</name>
    <name type="ordered locus">Pmen_3616</name>
</gene>
<dbReference type="EC" id="2.1.1.166" evidence="1"/>
<dbReference type="EMBL" id="CP000680">
    <property type="protein sequence ID" value="ABP86364.1"/>
    <property type="molecule type" value="Genomic_DNA"/>
</dbReference>
<dbReference type="SMR" id="A4XYE8"/>
<dbReference type="STRING" id="399739.Pmen_3616"/>
<dbReference type="KEGG" id="pmy:Pmen_3616"/>
<dbReference type="PATRIC" id="fig|399739.8.peg.3665"/>
<dbReference type="eggNOG" id="COG0293">
    <property type="taxonomic scope" value="Bacteria"/>
</dbReference>
<dbReference type="HOGENOM" id="CLU_009422_4_0_6"/>
<dbReference type="OrthoDB" id="9790080at2"/>
<dbReference type="GO" id="GO:0005737">
    <property type="term" value="C:cytoplasm"/>
    <property type="evidence" value="ECO:0007669"/>
    <property type="project" value="UniProtKB-SubCell"/>
</dbReference>
<dbReference type="GO" id="GO:0008650">
    <property type="term" value="F:rRNA (uridine-2'-O-)-methyltransferase activity"/>
    <property type="evidence" value="ECO:0007669"/>
    <property type="project" value="UniProtKB-UniRule"/>
</dbReference>
<dbReference type="FunFam" id="3.40.50.150:FF:000005">
    <property type="entry name" value="Ribosomal RNA large subunit methyltransferase E"/>
    <property type="match status" value="1"/>
</dbReference>
<dbReference type="Gene3D" id="3.40.50.150">
    <property type="entry name" value="Vaccinia Virus protein VP39"/>
    <property type="match status" value="1"/>
</dbReference>
<dbReference type="HAMAP" id="MF_01547">
    <property type="entry name" value="RNA_methyltr_E"/>
    <property type="match status" value="1"/>
</dbReference>
<dbReference type="InterPro" id="IPR050082">
    <property type="entry name" value="RNA_methyltr_RlmE"/>
</dbReference>
<dbReference type="InterPro" id="IPR002877">
    <property type="entry name" value="RNA_MeTrfase_FtsJ_dom"/>
</dbReference>
<dbReference type="InterPro" id="IPR015507">
    <property type="entry name" value="rRNA-MeTfrase_E"/>
</dbReference>
<dbReference type="InterPro" id="IPR029063">
    <property type="entry name" value="SAM-dependent_MTases_sf"/>
</dbReference>
<dbReference type="NCBIfam" id="NF008390">
    <property type="entry name" value="PRK11188.1"/>
    <property type="match status" value="1"/>
</dbReference>
<dbReference type="PANTHER" id="PTHR10920">
    <property type="entry name" value="RIBOSOMAL RNA METHYLTRANSFERASE"/>
    <property type="match status" value="1"/>
</dbReference>
<dbReference type="PANTHER" id="PTHR10920:SF18">
    <property type="entry name" value="RRNA METHYLTRANSFERASE 2, MITOCHONDRIAL"/>
    <property type="match status" value="1"/>
</dbReference>
<dbReference type="Pfam" id="PF01728">
    <property type="entry name" value="FtsJ"/>
    <property type="match status" value="1"/>
</dbReference>
<dbReference type="PIRSF" id="PIRSF005461">
    <property type="entry name" value="23S_rRNA_mtase"/>
    <property type="match status" value="1"/>
</dbReference>
<dbReference type="SUPFAM" id="SSF53335">
    <property type="entry name" value="S-adenosyl-L-methionine-dependent methyltransferases"/>
    <property type="match status" value="1"/>
</dbReference>
<organism>
    <name type="scientific">Ectopseudomonas mendocina (strain ymp)</name>
    <name type="common">Pseudomonas mendocina</name>
    <dbReference type="NCBI Taxonomy" id="399739"/>
    <lineage>
        <taxon>Bacteria</taxon>
        <taxon>Pseudomonadati</taxon>
        <taxon>Pseudomonadota</taxon>
        <taxon>Gammaproteobacteria</taxon>
        <taxon>Pseudomonadales</taxon>
        <taxon>Pseudomonadaceae</taxon>
        <taxon>Ectopseudomonas</taxon>
    </lineage>
</organism>
<evidence type="ECO:0000255" key="1">
    <source>
        <dbReference type="HAMAP-Rule" id="MF_01547"/>
    </source>
</evidence>